<sequence length="670" mass="77729">MLKIPLQLSSQDGIWPARFARRLHHHHQLAYHHHKQEQQQQQQQQQQQQAKQKQKQNGVQQGRSPTFMPVMLLLLMATLLTRPLSAFSNRLSDTKLHEIYLDDKEIKLSWMVDWYKQEVLFHLQNAFNEQHRWFYLGFSKRGGLADADICFFENQNGFFNAVTDTYTSPDGQWVRRDYQQDCEVFKMDEFTLAFRRKFDTCDPLDLRLHEGTMYVVWARGETELALEDHQFALPNVTAPHEAGVKMLQLLRADKILIPETELDHMEITLQEAPIPSQETTYWCHVQRLEGNLRRRHHIVQFEPLIRTPGIVHHMEVFHCEAGEHEEIPLYNGDCEQLPPRAKICSKVMVLWAMGAGTFTYPPEAGLPIGGPGFNPYVRLEVHFNNPEKQSGLVDNSGFRIKMSKTLRQYDAAVMELGLEYTDKMAIPPGQTAFPLSGYCVADCTRAALPATGIIIFGSQLHTHLRGVRVLTRHFRGEQELREVNRDDYYSNHFQEMRTLHYKPRVLPGDALVTTCYYNTKDDKTAALGGFSISDEMCVNYIHYYPATKLEVCKSSVSEETLENYFIYMKRTEHQHGVHLNGARSSNYRSIEWTQPRIDQLYTMYMQEPLSMQCNRSDGTRFEGRSSWEGVAATPVQIRIPIHRKLCPNYNPLWLKPLEKGDCDLLGECIY</sequence>
<feature type="chain" id="PRO_0000305216" description="Tyramine beta-hydroxylase">
    <location>
        <begin position="1"/>
        <end position="670"/>
    </location>
</feature>
<feature type="transmembrane region" description="Helical" evidence="2">
    <location>
        <begin position="65"/>
        <end position="81"/>
    </location>
</feature>
<feature type="domain" description="DOMON" evidence="3">
    <location>
        <begin position="104"/>
        <end position="220"/>
    </location>
</feature>
<feature type="region of interest" description="Disordered" evidence="4">
    <location>
        <begin position="26"/>
        <end position="63"/>
    </location>
</feature>
<feature type="compositionally biased region" description="Basic residues" evidence="4">
    <location>
        <begin position="26"/>
        <end position="35"/>
    </location>
</feature>
<feature type="compositionally biased region" description="Low complexity" evidence="4">
    <location>
        <begin position="38"/>
        <end position="61"/>
    </location>
</feature>
<feature type="active site" evidence="2">
    <location>
        <position position="281"/>
    </location>
</feature>
<feature type="active site" evidence="2">
    <location>
        <position position="461"/>
    </location>
</feature>
<feature type="binding site" evidence="1">
    <location>
        <position position="312"/>
    </location>
    <ligand>
        <name>Cu(2+)</name>
        <dbReference type="ChEBI" id="CHEBI:29036"/>
        <label>A</label>
    </ligand>
</feature>
<feature type="binding site" evidence="1">
    <location>
        <position position="313"/>
    </location>
    <ligand>
        <name>Cu(2+)</name>
        <dbReference type="ChEBI" id="CHEBI:29036"/>
        <label>A</label>
    </ligand>
</feature>
<feature type="binding site" evidence="1">
    <location>
        <position position="382"/>
    </location>
    <ligand>
        <name>Cu(2+)</name>
        <dbReference type="ChEBI" id="CHEBI:29036"/>
        <label>A</label>
    </ligand>
</feature>
<feature type="binding site" evidence="1">
    <location>
        <position position="461"/>
    </location>
    <ligand>
        <name>Cu(2+)</name>
        <dbReference type="ChEBI" id="CHEBI:29036"/>
        <label>B</label>
    </ligand>
</feature>
<feature type="binding site" evidence="1">
    <location>
        <position position="463"/>
    </location>
    <ligand>
        <name>Cu(2+)</name>
        <dbReference type="ChEBI" id="CHEBI:29036"/>
        <label>B</label>
    </ligand>
</feature>
<feature type="binding site" evidence="1">
    <location>
        <position position="536"/>
    </location>
    <ligand>
        <name>Cu(2+)</name>
        <dbReference type="ChEBI" id="CHEBI:29036"/>
        <label>B</label>
    </ligand>
</feature>
<feature type="glycosylation site" description="N-linked (GlcNAc...) asparagine" evidence="2">
    <location>
        <position position="235"/>
    </location>
</feature>
<feature type="glycosylation site" description="N-linked (GlcNAc...) asparagine" evidence="2">
    <location>
        <position position="614"/>
    </location>
</feature>
<feature type="disulfide bond" evidence="1">
    <location>
        <begin position="283"/>
        <end position="334"/>
    </location>
</feature>
<feature type="disulfide bond" evidence="1">
    <location>
        <begin position="319"/>
        <end position="344"/>
    </location>
</feature>
<feature type="disulfide bond" evidence="1">
    <location>
        <begin position="439"/>
        <end position="552"/>
    </location>
</feature>
<feature type="disulfide bond" evidence="1">
    <location>
        <begin position="443"/>
        <end position="613"/>
    </location>
</feature>
<feature type="disulfide bond" evidence="1">
    <location>
        <begin position="515"/>
        <end position="537"/>
    </location>
</feature>
<feature type="sequence conflict" description="In Ref. 1; CAA94391." evidence="14" ref="1">
    <original>I</original>
    <variation>M</variation>
    <location>
        <position position="4"/>
    </location>
</feature>
<feature type="sequence conflict" description="In Ref. 1; CAA94391." evidence="14" ref="1">
    <original>F</original>
    <variation>S</variation>
    <location>
        <position position="19"/>
    </location>
</feature>
<feature type="sequence conflict" description="In Ref. 1; CAA94391." evidence="14" ref="1">
    <location>
        <begin position="36"/>
        <end position="43"/>
    </location>
</feature>
<feature type="sequence conflict" description="In Ref. 1; CAA94391." evidence="14" ref="1">
    <original>T</original>
    <variation>S</variation>
    <location>
        <position position="260"/>
    </location>
</feature>
<protein>
    <recommendedName>
        <fullName evidence="13">Tyramine beta-hydroxylase</fullName>
        <ecNumber evidence="7">1.14.17.-</ecNumber>
    </recommendedName>
    <alternativeName>
        <fullName evidence="12">Tyramine beta-monooxygenase</fullName>
        <shortName evidence="12">TbetaM</shortName>
    </alternativeName>
</protein>
<accession>Q86B61</accession>
<accession>Q1EC33</accession>
<accession>Q24549</accession>
<name>TBH1_DROME</name>
<proteinExistence type="evidence at protein level"/>
<keyword id="KW-0186">Copper</keyword>
<keyword id="KW-1015">Disulfide bond</keyword>
<keyword id="KW-0325">Glycoprotein</keyword>
<keyword id="KW-0472">Membrane</keyword>
<keyword id="KW-0479">Metal-binding</keyword>
<keyword id="KW-0503">Monooxygenase</keyword>
<keyword id="KW-0530">Neurotransmitter biosynthesis</keyword>
<keyword id="KW-0560">Oxidoreductase</keyword>
<keyword id="KW-1185">Reference proteome</keyword>
<keyword id="KW-0812">Transmembrane</keyword>
<keyword id="KW-1133">Transmembrane helix</keyword>
<dbReference type="EC" id="1.14.17.-" evidence="7"/>
<dbReference type="EMBL" id="Z70316">
    <property type="protein sequence ID" value="CAA94391.2"/>
    <property type="molecule type" value="mRNA"/>
</dbReference>
<dbReference type="EMBL" id="AE014298">
    <property type="protein sequence ID" value="AAO41640.1"/>
    <property type="molecule type" value="Genomic_DNA"/>
</dbReference>
<dbReference type="EMBL" id="BT025901">
    <property type="protein sequence ID" value="ABG02145.1"/>
    <property type="molecule type" value="mRNA"/>
</dbReference>
<dbReference type="RefSeq" id="NP_001284996.1">
    <property type="nucleotide sequence ID" value="NM_001298067.1"/>
</dbReference>
<dbReference type="RefSeq" id="NP_788884.1">
    <property type="nucleotide sequence ID" value="NM_176711.3"/>
</dbReference>
<dbReference type="SMR" id="Q86B61"/>
<dbReference type="BioGRID" id="58190">
    <property type="interactions" value="2"/>
</dbReference>
<dbReference type="FunCoup" id="Q86B61">
    <property type="interactions" value="26"/>
</dbReference>
<dbReference type="STRING" id="7227.FBpp0089042"/>
<dbReference type="GlyCosmos" id="Q86B61">
    <property type="glycosylation" value="2 sites, No reported glycans"/>
</dbReference>
<dbReference type="GlyGen" id="Q86B61">
    <property type="glycosylation" value="2 sites"/>
</dbReference>
<dbReference type="PaxDb" id="7227-FBpp0089042"/>
<dbReference type="EnsemblMetazoa" id="FBtr0089999">
    <property type="protein sequence ID" value="FBpp0089042"/>
    <property type="gene ID" value="FBgn0010329"/>
</dbReference>
<dbReference type="EnsemblMetazoa" id="FBtr0340409">
    <property type="protein sequence ID" value="FBpp0309355"/>
    <property type="gene ID" value="FBgn0010329"/>
</dbReference>
<dbReference type="GeneID" id="31718"/>
<dbReference type="KEGG" id="dme:Dmel_CG1543"/>
<dbReference type="AGR" id="FB:FBgn0010329"/>
<dbReference type="CTD" id="31718"/>
<dbReference type="FlyBase" id="FBgn0010329">
    <property type="gene designation" value="Tbh"/>
</dbReference>
<dbReference type="VEuPathDB" id="VectorBase:FBgn0010329"/>
<dbReference type="eggNOG" id="KOG3568">
    <property type="taxonomic scope" value="Eukaryota"/>
</dbReference>
<dbReference type="HOGENOM" id="CLU_017939_3_0_1"/>
<dbReference type="InParanoid" id="Q86B61"/>
<dbReference type="OMA" id="FPHFSGP"/>
<dbReference type="OrthoDB" id="129121at2759"/>
<dbReference type="PhylomeDB" id="Q86B61"/>
<dbReference type="BioCyc" id="MetaCyc:MONOMER-18080"/>
<dbReference type="Reactome" id="R-DME-209905">
    <property type="pathway name" value="Catecholamine biosynthesis"/>
</dbReference>
<dbReference type="BioGRID-ORCS" id="31718">
    <property type="hits" value="0 hits in 3 CRISPR screens"/>
</dbReference>
<dbReference type="GenomeRNAi" id="31718"/>
<dbReference type="PRO" id="PR:Q86B61"/>
<dbReference type="Proteomes" id="UP000000803">
    <property type="component" value="Chromosome X"/>
</dbReference>
<dbReference type="Bgee" id="FBgn0010329">
    <property type="expression patterns" value="Expressed in adult octopaminergic neuron in brain and 43 other cell types or tissues"/>
</dbReference>
<dbReference type="ExpressionAtlas" id="Q86B61">
    <property type="expression patterns" value="baseline and differential"/>
</dbReference>
<dbReference type="GO" id="GO:0005615">
    <property type="term" value="C:extracellular space"/>
    <property type="evidence" value="ECO:0000318"/>
    <property type="project" value="GO_Central"/>
</dbReference>
<dbReference type="GO" id="GO:0030667">
    <property type="term" value="C:secretory granule membrane"/>
    <property type="evidence" value="ECO:0000318"/>
    <property type="project" value="GO_Central"/>
</dbReference>
<dbReference type="GO" id="GO:0005507">
    <property type="term" value="F:copper ion binding"/>
    <property type="evidence" value="ECO:0000318"/>
    <property type="project" value="GO_Central"/>
</dbReference>
<dbReference type="GO" id="GO:0004500">
    <property type="term" value="F:dopamine beta-monooxygenase activity"/>
    <property type="evidence" value="ECO:0000318"/>
    <property type="project" value="GO_Central"/>
</dbReference>
<dbReference type="GO" id="GO:0016715">
    <property type="term" value="F:oxidoreductase activity, acting on paired donors, with incorporation or reduction of molecular oxygen, reduced ascorbate as one donor, and incorporation of one atom of oxygen"/>
    <property type="evidence" value="ECO:0000315"/>
    <property type="project" value="UniProtKB"/>
</dbReference>
<dbReference type="GO" id="GO:0002118">
    <property type="term" value="P:aggressive behavior"/>
    <property type="evidence" value="ECO:0000315"/>
    <property type="project" value="FlyBase"/>
</dbReference>
<dbReference type="GO" id="GO:0048149">
    <property type="term" value="P:behavioral response to ethanol"/>
    <property type="evidence" value="ECO:0000315"/>
    <property type="project" value="FlyBase"/>
</dbReference>
<dbReference type="GO" id="GO:0048266">
    <property type="term" value="P:behavioral response to pain"/>
    <property type="evidence" value="ECO:0000315"/>
    <property type="project" value="FlyBase"/>
</dbReference>
<dbReference type="GO" id="GO:0042420">
    <property type="term" value="P:dopamine catabolic process"/>
    <property type="evidence" value="ECO:0000318"/>
    <property type="project" value="GO_Central"/>
</dbReference>
<dbReference type="GO" id="GO:0007629">
    <property type="term" value="P:flight behavior"/>
    <property type="evidence" value="ECO:0000315"/>
    <property type="project" value="FlyBase"/>
</dbReference>
<dbReference type="GO" id="GO:0002121">
    <property type="term" value="P:inter-male aggressive behavior"/>
    <property type="evidence" value="ECO:0000315"/>
    <property type="project" value="FlyBase"/>
</dbReference>
<dbReference type="GO" id="GO:0008345">
    <property type="term" value="P:larval locomotory behavior"/>
    <property type="evidence" value="ECO:0000315"/>
    <property type="project" value="FlyBase"/>
</dbReference>
<dbReference type="GO" id="GO:0007612">
    <property type="term" value="P:learning"/>
    <property type="evidence" value="ECO:0000315"/>
    <property type="project" value="FlyBase"/>
</dbReference>
<dbReference type="GO" id="GO:0040011">
    <property type="term" value="P:locomotion"/>
    <property type="evidence" value="ECO:0000315"/>
    <property type="project" value="UniProtKB"/>
</dbReference>
<dbReference type="GO" id="GO:0008049">
    <property type="term" value="P:male courtship behavior"/>
    <property type="evidence" value="ECO:0000315"/>
    <property type="project" value="FlyBase"/>
</dbReference>
<dbReference type="GO" id="GO:0048047">
    <property type="term" value="P:mating behavior, sex discrimination"/>
    <property type="evidence" value="ECO:0000316"/>
    <property type="project" value="FlyBase"/>
</dbReference>
<dbReference type="GO" id="GO:0007613">
    <property type="term" value="P:memory"/>
    <property type="evidence" value="ECO:0000315"/>
    <property type="project" value="FlyBase"/>
</dbReference>
<dbReference type="GO" id="GO:0042421">
    <property type="term" value="P:norepinephrine biosynthetic process"/>
    <property type="evidence" value="ECO:0000318"/>
    <property type="project" value="GO_Central"/>
</dbReference>
<dbReference type="GO" id="GO:0006589">
    <property type="term" value="P:octopamine biosynthetic process"/>
    <property type="evidence" value="ECO:0000318"/>
    <property type="project" value="GO_Central"/>
</dbReference>
<dbReference type="GO" id="GO:0071927">
    <property type="term" value="P:octopamine signaling pathway"/>
    <property type="evidence" value="ECO:0000314"/>
    <property type="project" value="FlyBase"/>
</dbReference>
<dbReference type="GO" id="GO:0030728">
    <property type="term" value="P:ovulation"/>
    <property type="evidence" value="ECO:0000315"/>
    <property type="project" value="FlyBase"/>
</dbReference>
<dbReference type="GO" id="GO:0050795">
    <property type="term" value="P:regulation of behavior"/>
    <property type="evidence" value="ECO:0000315"/>
    <property type="project" value="FlyBase"/>
</dbReference>
<dbReference type="GO" id="GO:0043059">
    <property type="term" value="P:regulation of forward locomotion"/>
    <property type="evidence" value="ECO:0000314"/>
    <property type="project" value="FlyBase"/>
</dbReference>
<dbReference type="CDD" id="cd09631">
    <property type="entry name" value="DOMON_DOH"/>
    <property type="match status" value="1"/>
</dbReference>
<dbReference type="FunFam" id="2.60.120.230:FF:000001">
    <property type="entry name" value="Monooxygenase, DBH-like 1"/>
    <property type="match status" value="1"/>
</dbReference>
<dbReference type="FunFam" id="2.60.120.310:FF:000010">
    <property type="entry name" value="tyramine beta-hydroxylase"/>
    <property type="match status" value="1"/>
</dbReference>
<dbReference type="Gene3D" id="2.60.120.230">
    <property type="match status" value="1"/>
</dbReference>
<dbReference type="Gene3D" id="2.60.120.310">
    <property type="entry name" value="Copper type II, ascorbate-dependent monooxygenase, N-terminal domain"/>
    <property type="match status" value="1"/>
</dbReference>
<dbReference type="InterPro" id="IPR014784">
    <property type="entry name" value="Cu2_ascorb_mOase-like_C"/>
</dbReference>
<dbReference type="InterPro" id="IPR020611">
    <property type="entry name" value="Cu2_ascorb_mOase_CS-1"/>
</dbReference>
<dbReference type="InterPro" id="IPR000323">
    <property type="entry name" value="Cu2_ascorb_mOase_N"/>
</dbReference>
<dbReference type="InterPro" id="IPR036939">
    <property type="entry name" value="Cu2_ascorb_mOase_N_sf"/>
</dbReference>
<dbReference type="InterPro" id="IPR024548">
    <property type="entry name" value="Cu2_monoox_C"/>
</dbReference>
<dbReference type="InterPro" id="IPR000945">
    <property type="entry name" value="DBH-like"/>
</dbReference>
<dbReference type="InterPro" id="IPR045266">
    <property type="entry name" value="DOH_DOMON"/>
</dbReference>
<dbReference type="InterPro" id="IPR005018">
    <property type="entry name" value="DOMON_domain"/>
</dbReference>
<dbReference type="InterPro" id="IPR008977">
    <property type="entry name" value="PHM/PNGase_F_dom_sf"/>
</dbReference>
<dbReference type="InterPro" id="IPR028460">
    <property type="entry name" value="Tbh/DBH"/>
</dbReference>
<dbReference type="PANTHER" id="PTHR10157">
    <property type="entry name" value="DOPAMINE BETA HYDROXYLASE RELATED"/>
    <property type="match status" value="1"/>
</dbReference>
<dbReference type="PANTHER" id="PTHR10157:SF29">
    <property type="entry name" value="DOPAMINE BETA-HYDROXYLASE"/>
    <property type="match status" value="1"/>
</dbReference>
<dbReference type="Pfam" id="PF03712">
    <property type="entry name" value="Cu2_monoox_C"/>
    <property type="match status" value="1"/>
</dbReference>
<dbReference type="Pfam" id="PF01082">
    <property type="entry name" value="Cu2_monooxygen"/>
    <property type="match status" value="1"/>
</dbReference>
<dbReference type="Pfam" id="PF03351">
    <property type="entry name" value="DOMON"/>
    <property type="match status" value="1"/>
</dbReference>
<dbReference type="PRINTS" id="PR00767">
    <property type="entry name" value="DBMONOXGNASE"/>
</dbReference>
<dbReference type="SMART" id="SM00664">
    <property type="entry name" value="DoH"/>
    <property type="match status" value="1"/>
</dbReference>
<dbReference type="SUPFAM" id="SSF49742">
    <property type="entry name" value="PHM/PNGase F"/>
    <property type="match status" value="2"/>
</dbReference>
<dbReference type="PROSITE" id="PS00084">
    <property type="entry name" value="CU2_MONOOXYGENASE_1"/>
    <property type="match status" value="1"/>
</dbReference>
<dbReference type="PROSITE" id="PS50836">
    <property type="entry name" value="DOMON"/>
    <property type="match status" value="1"/>
</dbReference>
<reference key="1">
    <citation type="journal article" date="1996" name="J. Neurosci.">
        <title>Characterization of Drosophila tyramine beta-hydroxylase gene and isolation of mutant flies lacking octopamine.</title>
        <authorList>
            <person name="Monastirioti M."/>
            <person name="Linn C.E. Jr."/>
            <person name="White K."/>
        </authorList>
    </citation>
    <scope>NUCLEOTIDE SEQUENCE [MRNA]</scope>
    <scope>TISSUE SPECIFICITY</scope>
    <scope>DEVELOPMENTAL STAGE</scope>
    <scope>FUNCTION</scope>
    <scope>DISRUPTION PHENOTYPE</scope>
    <source>
        <strain>Canton-S</strain>
        <tissue>Head</tissue>
    </source>
</reference>
<reference key="2">
    <citation type="journal article" date="2000" name="Science">
        <title>The genome sequence of Drosophila melanogaster.</title>
        <authorList>
            <person name="Adams M.D."/>
            <person name="Celniker S.E."/>
            <person name="Holt R.A."/>
            <person name="Evans C.A."/>
            <person name="Gocayne J.D."/>
            <person name="Amanatides P.G."/>
            <person name="Scherer S.E."/>
            <person name="Li P.W."/>
            <person name="Hoskins R.A."/>
            <person name="Galle R.F."/>
            <person name="George R.A."/>
            <person name="Lewis S.E."/>
            <person name="Richards S."/>
            <person name="Ashburner M."/>
            <person name="Henderson S.N."/>
            <person name="Sutton G.G."/>
            <person name="Wortman J.R."/>
            <person name="Yandell M.D."/>
            <person name="Zhang Q."/>
            <person name="Chen L.X."/>
            <person name="Brandon R.C."/>
            <person name="Rogers Y.-H.C."/>
            <person name="Blazej R.G."/>
            <person name="Champe M."/>
            <person name="Pfeiffer B.D."/>
            <person name="Wan K.H."/>
            <person name="Doyle C."/>
            <person name="Baxter E.G."/>
            <person name="Helt G."/>
            <person name="Nelson C.R."/>
            <person name="Miklos G.L.G."/>
            <person name="Abril J.F."/>
            <person name="Agbayani A."/>
            <person name="An H.-J."/>
            <person name="Andrews-Pfannkoch C."/>
            <person name="Baldwin D."/>
            <person name="Ballew R.M."/>
            <person name="Basu A."/>
            <person name="Baxendale J."/>
            <person name="Bayraktaroglu L."/>
            <person name="Beasley E.M."/>
            <person name="Beeson K.Y."/>
            <person name="Benos P.V."/>
            <person name="Berman B.P."/>
            <person name="Bhandari D."/>
            <person name="Bolshakov S."/>
            <person name="Borkova D."/>
            <person name="Botchan M.R."/>
            <person name="Bouck J."/>
            <person name="Brokstein P."/>
            <person name="Brottier P."/>
            <person name="Burtis K.C."/>
            <person name="Busam D.A."/>
            <person name="Butler H."/>
            <person name="Cadieu E."/>
            <person name="Center A."/>
            <person name="Chandra I."/>
            <person name="Cherry J.M."/>
            <person name="Cawley S."/>
            <person name="Dahlke C."/>
            <person name="Davenport L.B."/>
            <person name="Davies P."/>
            <person name="de Pablos B."/>
            <person name="Delcher A."/>
            <person name="Deng Z."/>
            <person name="Mays A.D."/>
            <person name="Dew I."/>
            <person name="Dietz S.M."/>
            <person name="Dodson K."/>
            <person name="Doup L.E."/>
            <person name="Downes M."/>
            <person name="Dugan-Rocha S."/>
            <person name="Dunkov B.C."/>
            <person name="Dunn P."/>
            <person name="Durbin K.J."/>
            <person name="Evangelista C.C."/>
            <person name="Ferraz C."/>
            <person name="Ferriera S."/>
            <person name="Fleischmann W."/>
            <person name="Fosler C."/>
            <person name="Gabrielian A.E."/>
            <person name="Garg N.S."/>
            <person name="Gelbart W.M."/>
            <person name="Glasser K."/>
            <person name="Glodek A."/>
            <person name="Gong F."/>
            <person name="Gorrell J.H."/>
            <person name="Gu Z."/>
            <person name="Guan P."/>
            <person name="Harris M."/>
            <person name="Harris N.L."/>
            <person name="Harvey D.A."/>
            <person name="Heiman T.J."/>
            <person name="Hernandez J.R."/>
            <person name="Houck J."/>
            <person name="Hostin D."/>
            <person name="Houston K.A."/>
            <person name="Howland T.J."/>
            <person name="Wei M.-H."/>
            <person name="Ibegwam C."/>
            <person name="Jalali M."/>
            <person name="Kalush F."/>
            <person name="Karpen G.H."/>
            <person name="Ke Z."/>
            <person name="Kennison J.A."/>
            <person name="Ketchum K.A."/>
            <person name="Kimmel B.E."/>
            <person name="Kodira C.D."/>
            <person name="Kraft C.L."/>
            <person name="Kravitz S."/>
            <person name="Kulp D."/>
            <person name="Lai Z."/>
            <person name="Lasko P."/>
            <person name="Lei Y."/>
            <person name="Levitsky A.A."/>
            <person name="Li J.H."/>
            <person name="Li Z."/>
            <person name="Liang Y."/>
            <person name="Lin X."/>
            <person name="Liu X."/>
            <person name="Mattei B."/>
            <person name="McIntosh T.C."/>
            <person name="McLeod M.P."/>
            <person name="McPherson D."/>
            <person name="Merkulov G."/>
            <person name="Milshina N.V."/>
            <person name="Mobarry C."/>
            <person name="Morris J."/>
            <person name="Moshrefi A."/>
            <person name="Mount S.M."/>
            <person name="Moy M."/>
            <person name="Murphy B."/>
            <person name="Murphy L."/>
            <person name="Muzny D.M."/>
            <person name="Nelson D.L."/>
            <person name="Nelson D.R."/>
            <person name="Nelson K.A."/>
            <person name="Nixon K."/>
            <person name="Nusskern D.R."/>
            <person name="Pacleb J.M."/>
            <person name="Palazzolo M."/>
            <person name="Pittman G.S."/>
            <person name="Pan S."/>
            <person name="Pollard J."/>
            <person name="Puri V."/>
            <person name="Reese M.G."/>
            <person name="Reinert K."/>
            <person name="Remington K."/>
            <person name="Saunders R.D.C."/>
            <person name="Scheeler F."/>
            <person name="Shen H."/>
            <person name="Shue B.C."/>
            <person name="Siden-Kiamos I."/>
            <person name="Simpson M."/>
            <person name="Skupski M.P."/>
            <person name="Smith T.J."/>
            <person name="Spier E."/>
            <person name="Spradling A.C."/>
            <person name="Stapleton M."/>
            <person name="Strong R."/>
            <person name="Sun E."/>
            <person name="Svirskas R."/>
            <person name="Tector C."/>
            <person name="Turner R."/>
            <person name="Venter E."/>
            <person name="Wang A.H."/>
            <person name="Wang X."/>
            <person name="Wang Z.-Y."/>
            <person name="Wassarman D.A."/>
            <person name="Weinstock G.M."/>
            <person name="Weissenbach J."/>
            <person name="Williams S.M."/>
            <person name="Woodage T."/>
            <person name="Worley K.C."/>
            <person name="Wu D."/>
            <person name="Yang S."/>
            <person name="Yao Q.A."/>
            <person name="Ye J."/>
            <person name="Yeh R.-F."/>
            <person name="Zaveri J.S."/>
            <person name="Zhan M."/>
            <person name="Zhang G."/>
            <person name="Zhao Q."/>
            <person name="Zheng L."/>
            <person name="Zheng X.H."/>
            <person name="Zhong F.N."/>
            <person name="Zhong W."/>
            <person name="Zhou X."/>
            <person name="Zhu S.C."/>
            <person name="Zhu X."/>
            <person name="Smith H.O."/>
            <person name="Gibbs R.A."/>
            <person name="Myers E.W."/>
            <person name="Rubin G.M."/>
            <person name="Venter J.C."/>
        </authorList>
    </citation>
    <scope>NUCLEOTIDE SEQUENCE [LARGE SCALE GENOMIC DNA]</scope>
    <source>
        <strain>Berkeley</strain>
    </source>
</reference>
<reference key="3">
    <citation type="journal article" date="2002" name="Genome Biol.">
        <title>Annotation of the Drosophila melanogaster euchromatic genome: a systematic review.</title>
        <authorList>
            <person name="Misra S."/>
            <person name="Crosby M.A."/>
            <person name="Mungall C.J."/>
            <person name="Matthews B.B."/>
            <person name="Campbell K.S."/>
            <person name="Hradecky P."/>
            <person name="Huang Y."/>
            <person name="Kaminker J.S."/>
            <person name="Millburn G.H."/>
            <person name="Prochnik S.E."/>
            <person name="Smith C.D."/>
            <person name="Tupy J.L."/>
            <person name="Whitfield E.J."/>
            <person name="Bayraktaroglu L."/>
            <person name="Berman B.P."/>
            <person name="Bettencourt B.R."/>
            <person name="Celniker S.E."/>
            <person name="de Grey A.D.N.J."/>
            <person name="Drysdale R.A."/>
            <person name="Harris N.L."/>
            <person name="Richter J."/>
            <person name="Russo S."/>
            <person name="Schroeder A.J."/>
            <person name="Shu S.Q."/>
            <person name="Stapleton M."/>
            <person name="Yamada C."/>
            <person name="Ashburner M."/>
            <person name="Gelbart W.M."/>
            <person name="Rubin G.M."/>
            <person name="Lewis S.E."/>
        </authorList>
    </citation>
    <scope>GENOME REANNOTATION</scope>
    <source>
        <strain>Berkeley</strain>
    </source>
</reference>
<reference key="4">
    <citation type="journal article" date="2002" name="Genome Biol.">
        <title>A Drosophila full-length cDNA resource.</title>
        <authorList>
            <person name="Stapleton M."/>
            <person name="Carlson J.W."/>
            <person name="Brokstein P."/>
            <person name="Yu C."/>
            <person name="Champe M."/>
            <person name="George R.A."/>
            <person name="Guarin H."/>
            <person name="Kronmiller B."/>
            <person name="Pacleb J.M."/>
            <person name="Park S."/>
            <person name="Wan K.H."/>
            <person name="Rubin G.M."/>
            <person name="Celniker S.E."/>
        </authorList>
    </citation>
    <scope>NUCLEOTIDE SEQUENCE [LARGE SCALE MRNA] OF 98-670</scope>
    <source>
        <strain>Berkeley</strain>
    </source>
</reference>
<reference key="5">
    <citation type="journal article" date="2003" name="Dev. Biol.">
        <title>Distinct octopamine cell population residing in the CNS abdominal ganglion controls ovulation in Drosophila melanogaster.</title>
        <authorList>
            <person name="Monastirioti M."/>
        </authorList>
    </citation>
    <scope>FUNCTION</scope>
</reference>
<reference key="6">
    <citation type="journal article" date="2004" name="J. Neurobiol.">
        <title>Tyramine and octopamine have opposite effects on the locomotion of Drosophila larvae.</title>
        <authorList>
            <person name="Saraswati S."/>
            <person name="Fox L.E."/>
            <person name="Soll D.R."/>
            <person name="Wu C.-F."/>
        </authorList>
    </citation>
    <scope>FUNCTION</scope>
</reference>
<reference key="7">
    <citation type="journal article" date="2006" name="Protein Expr. Purif.">
        <title>Expression and characterization of recombinant tyramine beta-monooxygenase from Drosophila: a monomeric copper-containing hydroxylase.</title>
        <authorList>
            <person name="Gray E.E."/>
            <person name="Small S.N."/>
            <person name="McGuirl M.A."/>
        </authorList>
    </citation>
    <scope>FUNCTION</scope>
    <scope>CATALYTIC ACTIVITY</scope>
    <scope>COFACTOR</scope>
    <scope>BIOPHYSICOCHEMICAL PROPERTIES</scope>
    <scope>SUBUNIT</scope>
</reference>
<reference key="8">
    <citation type="journal article" date="2013" name="Neuropharmacology">
        <title>Mutations in Bacchus reveal a tyramine-dependent nuclear regulator for acute ethanol sensitivity in Drosophila.</title>
        <authorList>
            <person name="Chen J."/>
            <person name="Wang Y."/>
            <person name="Zhang Y."/>
            <person name="Shen P."/>
        </authorList>
    </citation>
    <scope>FUNCTION</scope>
</reference>
<reference key="9">
    <citation type="journal article" date="2014" name="PLoS Genet.">
        <title>Obesity-linked homologues TfAP-2 and Twz establish meal frequency in Drosophila melanogaster.</title>
        <authorList>
            <person name="Williams M.J."/>
            <person name="Goergen P."/>
            <person name="Rajendran J."/>
            <person name="Zheleznyakova G."/>
            <person name="Haegglund M.G."/>
            <person name="Perland E."/>
            <person name="Bagchi S."/>
            <person name="Kalogeropoulou A."/>
            <person name="Khan Z."/>
            <person name="Fredriksson R."/>
            <person name="Schioeth H.B."/>
        </authorList>
    </citation>
    <scope>INDUCTION</scope>
</reference>
<reference key="10">
    <citation type="journal article" date="2023" name="Elife">
        <title>Belly roll, a GPI-anchored Ly6 protein, regulates Drosophila melanogaster escape behaviors by modulating the excitability of nociceptive peptidergic interneurons.</title>
        <authorList>
            <person name="Li K."/>
            <person name="Tsukasa Y."/>
            <person name="Kurio M."/>
            <person name="Maeta K."/>
            <person name="Tsumadori A."/>
            <person name="Baba S."/>
            <person name="Nishimura R."/>
            <person name="Murakami A."/>
            <person name="Onodera K."/>
            <person name="Morimoto T."/>
            <person name="Uemura T."/>
            <person name="Usui T."/>
        </authorList>
    </citation>
    <scope>FUNCTION</scope>
</reference>
<organism>
    <name type="scientific">Drosophila melanogaster</name>
    <name type="common">Fruit fly</name>
    <dbReference type="NCBI Taxonomy" id="7227"/>
    <lineage>
        <taxon>Eukaryota</taxon>
        <taxon>Metazoa</taxon>
        <taxon>Ecdysozoa</taxon>
        <taxon>Arthropoda</taxon>
        <taxon>Hexapoda</taxon>
        <taxon>Insecta</taxon>
        <taxon>Pterygota</taxon>
        <taxon>Neoptera</taxon>
        <taxon>Endopterygota</taxon>
        <taxon>Diptera</taxon>
        <taxon>Brachycera</taxon>
        <taxon>Muscomorpha</taxon>
        <taxon>Ephydroidea</taxon>
        <taxon>Drosophilidae</taxon>
        <taxon>Drosophila</taxon>
        <taxon>Sophophora</taxon>
    </lineage>
</organism>
<comment type="function">
    <text evidence="5 6 7 8 10 11">Catalyzes the hydroxylation of tyramine into octopamine, a neurotransmitter involved in ovulation and locomotion (PubMed:14623230, PubMed:14978721, PubMed:16376104, PubMed:8656284). Functions in an amine-mediated Bacc-dependent signaling pathway that negatively regulates acute ethanol sensitivity (PubMed:23142736). Involved in facilitation of nociceptive escape behavior in response to potentially damaging stimuli, such as high temperatures (PubMed:37309249).</text>
</comment>
<comment type="catalytic activity">
    <reaction evidence="7">
        <text>tyramine + L-ascorbate + O2 = (R)-octopamine + L-dehydroascorbate + H2O</text>
        <dbReference type="Rhea" id="RHEA:57132"/>
        <dbReference type="ChEBI" id="CHEBI:15377"/>
        <dbReference type="ChEBI" id="CHEBI:15379"/>
        <dbReference type="ChEBI" id="CHEBI:38290"/>
        <dbReference type="ChEBI" id="CHEBI:58539"/>
        <dbReference type="ChEBI" id="CHEBI:141486"/>
        <dbReference type="ChEBI" id="CHEBI:327995"/>
    </reaction>
    <physiologicalReaction direction="left-to-right" evidence="15">
        <dbReference type="Rhea" id="RHEA:57133"/>
    </physiologicalReaction>
</comment>
<comment type="cofactor">
    <cofactor evidence="7">
        <name>Cu(2+)</name>
        <dbReference type="ChEBI" id="CHEBI:29036"/>
    </cofactor>
    <text evidence="15">Binds 2 copper ions per subunit.</text>
</comment>
<comment type="biophysicochemical properties">
    <kinetics>
        <KM evidence="7">0.161 mM for tyramine</KM>
        <KM evidence="7">0.181 mM for dopamine</KM>
        <KM evidence="7">16 mM for phenethylamine</KM>
        <text evidence="7">kcat is 1.05 sec(-1) with tyramine as substrate. kcat is 0.115 sec(-1) with dopamine as substrate. kcat is 0.37 sec(-1) with phenethylamine as substrate.</text>
    </kinetics>
</comment>
<comment type="subunit">
    <text evidence="7">Is most likely a monomer under physiological conditions, although under conditions of high pH and low ionic strength the dimeric form predominates. Both forms are equally active.</text>
</comment>
<comment type="subcellular location">
    <subcellularLocation>
        <location evidence="14">Membrane</location>
        <topology evidence="14">Single-pass membrane protein</topology>
    </subcellularLocation>
</comment>
<comment type="tissue specificity">
    <text evidence="11">Present in head and in neurons innervating the oviduct (at protein level).</text>
</comment>
<comment type="developmental stage">
    <text evidence="11">At larval stage, present in cell bodies of the ventral ganglion and in neuropil (at protein level).</text>
</comment>
<comment type="induction">
    <text evidence="9">Slightly down-regulated in adults fed a high calorie diet.</text>
</comment>
<comment type="disruption phenotype">
    <text evidence="11">Flies survive to adulthood. Mutant males are fertile, but mutant females are sterile due to defects in ovulation.</text>
</comment>
<comment type="similarity">
    <text evidence="14">Belongs to the copper type II ascorbate-dependent monooxygenase family.</text>
</comment>
<gene>
    <name type="primary">Tbh</name>
    <name type="ORF">CG1543</name>
</gene>
<evidence type="ECO:0000250" key="1">
    <source>
        <dbReference type="UniProtKB" id="P09172"/>
    </source>
</evidence>
<evidence type="ECO:0000255" key="2"/>
<evidence type="ECO:0000255" key="3">
    <source>
        <dbReference type="PROSITE-ProRule" id="PRU00246"/>
    </source>
</evidence>
<evidence type="ECO:0000256" key="4">
    <source>
        <dbReference type="SAM" id="MobiDB-lite"/>
    </source>
</evidence>
<evidence type="ECO:0000269" key="5">
    <source>
    </source>
</evidence>
<evidence type="ECO:0000269" key="6">
    <source>
    </source>
</evidence>
<evidence type="ECO:0000269" key="7">
    <source>
    </source>
</evidence>
<evidence type="ECO:0000269" key="8">
    <source>
    </source>
</evidence>
<evidence type="ECO:0000269" key="9">
    <source>
    </source>
</evidence>
<evidence type="ECO:0000269" key="10">
    <source>
    </source>
</evidence>
<evidence type="ECO:0000269" key="11">
    <source>
    </source>
</evidence>
<evidence type="ECO:0000303" key="12">
    <source>
    </source>
</evidence>
<evidence type="ECO:0000303" key="13">
    <source>
    </source>
</evidence>
<evidence type="ECO:0000305" key="14"/>
<evidence type="ECO:0000305" key="15">
    <source>
    </source>
</evidence>